<comment type="function">
    <text evidence="1">This is one of the proteins that bind and probably mediate the attachment of the 5S RNA into the large ribosomal subunit, where it forms part of the central protuberance.</text>
</comment>
<comment type="subunit">
    <text evidence="1">Part of the 50S ribosomal subunit; part of the 5S rRNA/L5/L18/L25 subcomplex. Contacts the 5S and 23S rRNAs.</text>
</comment>
<comment type="similarity">
    <text evidence="1">Belongs to the universal ribosomal protein uL18 family.</text>
</comment>
<keyword id="KW-0687">Ribonucleoprotein</keyword>
<keyword id="KW-0689">Ribosomal protein</keyword>
<keyword id="KW-0694">RNA-binding</keyword>
<keyword id="KW-0699">rRNA-binding</keyword>
<sequence length="120" mass="12813">MSNKNEALLRRKARVRRALRAAANGRPRLSVFRSSKQIYVQVIDDAAGRTLAAASSLDKDLKSSLKTGADKAAAEAVGKLVAERAKAAGVTKVVFDRSGYIFHGRVKALADAAREGGLDF</sequence>
<evidence type="ECO:0000255" key="1">
    <source>
        <dbReference type="HAMAP-Rule" id="MF_01337"/>
    </source>
</evidence>
<evidence type="ECO:0000305" key="2"/>
<reference key="1">
    <citation type="submission" date="2007-12" db="EMBL/GenBank/DDBJ databases">
        <title>Complete sequence of Methylobacterium extorquens PA1.</title>
        <authorList>
            <consortium name="US DOE Joint Genome Institute"/>
            <person name="Copeland A."/>
            <person name="Lucas S."/>
            <person name="Lapidus A."/>
            <person name="Barry K."/>
            <person name="Glavina del Rio T."/>
            <person name="Dalin E."/>
            <person name="Tice H."/>
            <person name="Pitluck S."/>
            <person name="Saunders E."/>
            <person name="Brettin T."/>
            <person name="Bruce D."/>
            <person name="Detter J.C."/>
            <person name="Han C."/>
            <person name="Schmutz J."/>
            <person name="Larimer F."/>
            <person name="Land M."/>
            <person name="Hauser L."/>
            <person name="Kyrpides N."/>
            <person name="Kim E."/>
            <person name="Marx C."/>
            <person name="Richardson P."/>
        </authorList>
    </citation>
    <scope>NUCLEOTIDE SEQUENCE [LARGE SCALE GENOMIC DNA]</scope>
    <source>
        <strain>PA1</strain>
    </source>
</reference>
<name>RL18_METEP</name>
<organism>
    <name type="scientific">Methylorubrum extorquens (strain PA1)</name>
    <name type="common">Methylobacterium extorquens</name>
    <dbReference type="NCBI Taxonomy" id="419610"/>
    <lineage>
        <taxon>Bacteria</taxon>
        <taxon>Pseudomonadati</taxon>
        <taxon>Pseudomonadota</taxon>
        <taxon>Alphaproteobacteria</taxon>
        <taxon>Hyphomicrobiales</taxon>
        <taxon>Methylobacteriaceae</taxon>
        <taxon>Methylorubrum</taxon>
    </lineage>
</organism>
<proteinExistence type="inferred from homology"/>
<accession>A9W4S4</accession>
<gene>
    <name evidence="1" type="primary">rplR</name>
    <name type="ordered locus">Mext_2185</name>
</gene>
<feature type="chain" id="PRO_1000142687" description="Large ribosomal subunit protein uL18">
    <location>
        <begin position="1"/>
        <end position="120"/>
    </location>
</feature>
<dbReference type="EMBL" id="CP000908">
    <property type="protein sequence ID" value="ABY30580.1"/>
    <property type="molecule type" value="Genomic_DNA"/>
</dbReference>
<dbReference type="RefSeq" id="WP_003597133.1">
    <property type="nucleotide sequence ID" value="NC_010172.1"/>
</dbReference>
<dbReference type="SMR" id="A9W4S4"/>
<dbReference type="GeneID" id="72989873"/>
<dbReference type="KEGG" id="mex:Mext_2185"/>
<dbReference type="eggNOG" id="COG0256">
    <property type="taxonomic scope" value="Bacteria"/>
</dbReference>
<dbReference type="HOGENOM" id="CLU_098841_0_1_5"/>
<dbReference type="BioCyc" id="MEXT419610:MEXT_RS11030-MONOMER"/>
<dbReference type="GO" id="GO:0022625">
    <property type="term" value="C:cytosolic large ribosomal subunit"/>
    <property type="evidence" value="ECO:0007669"/>
    <property type="project" value="TreeGrafter"/>
</dbReference>
<dbReference type="GO" id="GO:0008097">
    <property type="term" value="F:5S rRNA binding"/>
    <property type="evidence" value="ECO:0007669"/>
    <property type="project" value="TreeGrafter"/>
</dbReference>
<dbReference type="GO" id="GO:0003735">
    <property type="term" value="F:structural constituent of ribosome"/>
    <property type="evidence" value="ECO:0007669"/>
    <property type="project" value="InterPro"/>
</dbReference>
<dbReference type="GO" id="GO:0006412">
    <property type="term" value="P:translation"/>
    <property type="evidence" value="ECO:0007669"/>
    <property type="project" value="UniProtKB-UniRule"/>
</dbReference>
<dbReference type="CDD" id="cd00432">
    <property type="entry name" value="Ribosomal_L18_L5e"/>
    <property type="match status" value="1"/>
</dbReference>
<dbReference type="FunFam" id="3.30.420.100:FF:000001">
    <property type="entry name" value="50S ribosomal protein L18"/>
    <property type="match status" value="1"/>
</dbReference>
<dbReference type="Gene3D" id="3.30.420.100">
    <property type="match status" value="1"/>
</dbReference>
<dbReference type="HAMAP" id="MF_01337_B">
    <property type="entry name" value="Ribosomal_uL18_B"/>
    <property type="match status" value="1"/>
</dbReference>
<dbReference type="InterPro" id="IPR004389">
    <property type="entry name" value="Ribosomal_uL18_bac-type"/>
</dbReference>
<dbReference type="InterPro" id="IPR005484">
    <property type="entry name" value="Ribosomal_uL18_bac/euk"/>
</dbReference>
<dbReference type="NCBIfam" id="TIGR00060">
    <property type="entry name" value="L18_bact"/>
    <property type="match status" value="1"/>
</dbReference>
<dbReference type="PANTHER" id="PTHR12899">
    <property type="entry name" value="39S RIBOSOMAL PROTEIN L18, MITOCHONDRIAL"/>
    <property type="match status" value="1"/>
</dbReference>
<dbReference type="PANTHER" id="PTHR12899:SF3">
    <property type="entry name" value="LARGE RIBOSOMAL SUBUNIT PROTEIN UL18M"/>
    <property type="match status" value="1"/>
</dbReference>
<dbReference type="Pfam" id="PF00861">
    <property type="entry name" value="Ribosomal_L18p"/>
    <property type="match status" value="1"/>
</dbReference>
<dbReference type="SUPFAM" id="SSF53137">
    <property type="entry name" value="Translational machinery components"/>
    <property type="match status" value="1"/>
</dbReference>
<protein>
    <recommendedName>
        <fullName evidence="1">Large ribosomal subunit protein uL18</fullName>
    </recommendedName>
    <alternativeName>
        <fullName evidence="2">50S ribosomal protein L18</fullName>
    </alternativeName>
</protein>